<dbReference type="EMBL" id="Y18930">
    <property type="protein sequence ID" value="CAB57601.1"/>
    <property type="molecule type" value="Genomic_DNA"/>
</dbReference>
<dbReference type="EMBL" id="AE006641">
    <property type="protein sequence ID" value="AAK41003.1"/>
    <property type="molecule type" value="Genomic_DNA"/>
</dbReference>
<dbReference type="PIR" id="D90218">
    <property type="entry name" value="D90218"/>
</dbReference>
<dbReference type="RefSeq" id="WP_009991260.1">
    <property type="nucleotide sequence ID" value="NC_002754.1"/>
</dbReference>
<dbReference type="SMR" id="Q9UX91"/>
<dbReference type="FunCoup" id="Q9UX91">
    <property type="interactions" value="202"/>
</dbReference>
<dbReference type="STRING" id="273057.SSO0702"/>
<dbReference type="PaxDb" id="273057-SSO0702"/>
<dbReference type="EnsemblBacteria" id="AAK41003">
    <property type="protein sequence ID" value="AAK41003"/>
    <property type="gene ID" value="SSO0702"/>
</dbReference>
<dbReference type="KEGG" id="sso:SSO0702"/>
<dbReference type="PATRIC" id="fig|273057.12.peg.702"/>
<dbReference type="eggNOG" id="arCOG04090">
    <property type="taxonomic scope" value="Archaea"/>
</dbReference>
<dbReference type="HOGENOM" id="CLU_065464_0_0_2"/>
<dbReference type="InParanoid" id="Q9UX91"/>
<dbReference type="PhylomeDB" id="Q9UX91"/>
<dbReference type="Proteomes" id="UP000001974">
    <property type="component" value="Chromosome"/>
</dbReference>
<dbReference type="GO" id="GO:0022625">
    <property type="term" value="C:cytosolic large ribosomal subunit"/>
    <property type="evidence" value="ECO:0000318"/>
    <property type="project" value="GO_Central"/>
</dbReference>
<dbReference type="GO" id="GO:0019843">
    <property type="term" value="F:rRNA binding"/>
    <property type="evidence" value="ECO:0007669"/>
    <property type="project" value="UniProtKB-UniRule"/>
</dbReference>
<dbReference type="GO" id="GO:0003735">
    <property type="term" value="F:structural constituent of ribosome"/>
    <property type="evidence" value="ECO:0000318"/>
    <property type="project" value="GO_Central"/>
</dbReference>
<dbReference type="GO" id="GO:0002181">
    <property type="term" value="P:cytoplasmic translation"/>
    <property type="evidence" value="ECO:0000318"/>
    <property type="project" value="GO_Central"/>
</dbReference>
<dbReference type="FunFam" id="3.90.930.12:FF:000008">
    <property type="entry name" value="50S ribosomal protein L6"/>
    <property type="match status" value="1"/>
</dbReference>
<dbReference type="FunFam" id="3.90.930.12:FF:000004">
    <property type="entry name" value="60S ribosomal protein L9"/>
    <property type="match status" value="1"/>
</dbReference>
<dbReference type="Gene3D" id="3.90.930.12">
    <property type="entry name" value="Ribosomal protein L6, alpha-beta domain"/>
    <property type="match status" value="2"/>
</dbReference>
<dbReference type="HAMAP" id="MF_01365_A">
    <property type="entry name" value="Ribosomal_uL6_A"/>
    <property type="match status" value="1"/>
</dbReference>
<dbReference type="InterPro" id="IPR000702">
    <property type="entry name" value="Ribosomal_uL6-like"/>
</dbReference>
<dbReference type="InterPro" id="IPR036789">
    <property type="entry name" value="Ribosomal_uL6-like_a/b-dom_sf"/>
</dbReference>
<dbReference type="InterPro" id="IPR020040">
    <property type="entry name" value="Ribosomal_uL6_a/b-dom"/>
</dbReference>
<dbReference type="InterPro" id="IPR019907">
    <property type="entry name" value="Ribosomal_uL6_arc"/>
</dbReference>
<dbReference type="InterPro" id="IPR002359">
    <property type="entry name" value="Ribosomal_uL6_CS2"/>
</dbReference>
<dbReference type="NCBIfam" id="NF004037">
    <property type="entry name" value="PRK05518.1"/>
    <property type="match status" value="1"/>
</dbReference>
<dbReference type="NCBIfam" id="TIGR03653">
    <property type="entry name" value="uL6_arch"/>
    <property type="match status" value="1"/>
</dbReference>
<dbReference type="PANTHER" id="PTHR11655:SF16">
    <property type="entry name" value="60S RIBOSOMAL PROTEIN L9"/>
    <property type="match status" value="1"/>
</dbReference>
<dbReference type="PANTHER" id="PTHR11655">
    <property type="entry name" value="60S/50S RIBOSOMAL PROTEIN L6/L9"/>
    <property type="match status" value="1"/>
</dbReference>
<dbReference type="Pfam" id="PF00347">
    <property type="entry name" value="Ribosomal_L6"/>
    <property type="match status" value="2"/>
</dbReference>
<dbReference type="PIRSF" id="PIRSF002162">
    <property type="entry name" value="Ribosomal_L6"/>
    <property type="match status" value="1"/>
</dbReference>
<dbReference type="SUPFAM" id="SSF56053">
    <property type="entry name" value="Ribosomal protein L6"/>
    <property type="match status" value="2"/>
</dbReference>
<dbReference type="PROSITE" id="PS00700">
    <property type="entry name" value="RIBOSOMAL_L6_2"/>
    <property type="match status" value="1"/>
</dbReference>
<accession>Q9UX91</accession>
<keyword id="KW-1185">Reference proteome</keyword>
<keyword id="KW-0687">Ribonucleoprotein</keyword>
<keyword id="KW-0689">Ribosomal protein</keyword>
<keyword id="KW-0694">RNA-binding</keyword>
<keyword id="KW-0699">rRNA-binding</keyword>
<name>RL6_SACS2</name>
<feature type="chain" id="PRO_0000131091" description="Large ribosomal subunit protein uL6">
    <location>
        <begin position="1"/>
        <end position="181"/>
    </location>
</feature>
<comment type="function">
    <text evidence="1">This protein binds to the 23S rRNA, and is important in its secondary structure. It is located near the subunit interface in the base of the L7/L12 stalk, and near the tRNA binding site of the peptidyltransferase center.</text>
</comment>
<comment type="subunit">
    <text evidence="1">Part of the 50S ribosomal subunit.</text>
</comment>
<comment type="similarity">
    <text evidence="1">Belongs to the universal ribosomal protein uL6 family.</text>
</comment>
<reference key="1">
    <citation type="journal article" date="2000" name="Genome">
        <title>Gene content and organization of a 281-kbp contig from the genome of the extremely thermophilic archaeon, Sulfolobus solfataricus P2.</title>
        <authorList>
            <person name="Charlebois R.L."/>
            <person name="Singh R.K."/>
            <person name="Chan-Weiher C.C.-Y."/>
            <person name="Allard G."/>
            <person name="Chow C."/>
            <person name="Confalonieri F."/>
            <person name="Curtis B."/>
            <person name="Duguet M."/>
            <person name="Erauso G."/>
            <person name="Faguy D."/>
            <person name="Gaasterland T."/>
            <person name="Garrett R.A."/>
            <person name="Gordon P."/>
            <person name="Jeffries A.C."/>
            <person name="Kozera C."/>
            <person name="Kushwaha N."/>
            <person name="Lafleur E."/>
            <person name="Medina N."/>
            <person name="Peng X."/>
            <person name="Penny S.L."/>
            <person name="She Q."/>
            <person name="St Jean A."/>
            <person name="van der Oost J."/>
            <person name="Young F."/>
            <person name="Zivanovic Y."/>
            <person name="Doolittle W.F."/>
            <person name="Ragan M.A."/>
            <person name="Sensen C.W."/>
        </authorList>
    </citation>
    <scope>NUCLEOTIDE SEQUENCE [LARGE SCALE GENOMIC DNA]</scope>
    <source>
        <strain>ATCC 35092 / DSM 1617 / JCM 11322 / P2</strain>
    </source>
</reference>
<reference key="2">
    <citation type="journal article" date="2001" name="Proc. Natl. Acad. Sci. U.S.A.">
        <title>The complete genome of the crenarchaeon Sulfolobus solfataricus P2.</title>
        <authorList>
            <person name="She Q."/>
            <person name="Singh R.K."/>
            <person name="Confalonieri F."/>
            <person name="Zivanovic Y."/>
            <person name="Allard G."/>
            <person name="Awayez M.J."/>
            <person name="Chan-Weiher C.C.-Y."/>
            <person name="Clausen I.G."/>
            <person name="Curtis B.A."/>
            <person name="De Moors A."/>
            <person name="Erauso G."/>
            <person name="Fletcher C."/>
            <person name="Gordon P.M.K."/>
            <person name="Heikamp-de Jong I."/>
            <person name="Jeffries A.C."/>
            <person name="Kozera C.J."/>
            <person name="Medina N."/>
            <person name="Peng X."/>
            <person name="Thi-Ngoc H.P."/>
            <person name="Redder P."/>
            <person name="Schenk M.E."/>
            <person name="Theriault C."/>
            <person name="Tolstrup N."/>
            <person name="Charlebois R.L."/>
            <person name="Doolittle W.F."/>
            <person name="Duguet M."/>
            <person name="Gaasterland T."/>
            <person name="Garrett R.A."/>
            <person name="Ragan M.A."/>
            <person name="Sensen C.W."/>
            <person name="Van der Oost J."/>
        </authorList>
    </citation>
    <scope>NUCLEOTIDE SEQUENCE [LARGE SCALE GENOMIC DNA]</scope>
    <source>
        <strain>ATCC 35092 / DSM 1617 / JCM 11322 / P2</strain>
    </source>
</reference>
<sequence length="181" mass="20215">MQIVILREEIEIPKNVVVDLKGSIIKIKGPKGEVVKDFSFAKGIQISLDGNKIVLETTFANRRKKAVFYSIVSHIKNMITGVTKGYRYYLKIIYTHFPTSVKVVGNEVQITNLIGEKNTRRAQILEGVKVTVKGEDIVVEGPNLEAVAQTAANIESASKISGFDRRIFSDGIFIYKKEVIE</sequence>
<gene>
    <name evidence="1" type="primary">rpl6</name>
    <name evidence="1" type="synonym">rpl6Ab</name>
    <name type="ordered locus">SSO0702</name>
    <name type="ORF">C10_028</name>
</gene>
<organism>
    <name type="scientific">Saccharolobus solfataricus (strain ATCC 35092 / DSM 1617 / JCM 11322 / P2)</name>
    <name type="common">Sulfolobus solfataricus</name>
    <dbReference type="NCBI Taxonomy" id="273057"/>
    <lineage>
        <taxon>Archaea</taxon>
        <taxon>Thermoproteota</taxon>
        <taxon>Thermoprotei</taxon>
        <taxon>Sulfolobales</taxon>
        <taxon>Sulfolobaceae</taxon>
        <taxon>Saccharolobus</taxon>
    </lineage>
</organism>
<proteinExistence type="inferred from homology"/>
<protein>
    <recommendedName>
        <fullName evidence="1">Large ribosomal subunit protein uL6</fullName>
    </recommendedName>
    <alternativeName>
        <fullName evidence="2">50S ribosomal protein L6</fullName>
    </alternativeName>
</protein>
<evidence type="ECO:0000255" key="1">
    <source>
        <dbReference type="HAMAP-Rule" id="MF_01365"/>
    </source>
</evidence>
<evidence type="ECO:0000305" key="2"/>